<feature type="chain" id="PRO_0000141228" description="Ribose-phosphate pyrophosphokinase">
    <location>
        <begin position="1"/>
        <end position="319"/>
    </location>
</feature>
<feature type="active site" evidence="1">
    <location>
        <position position="198"/>
    </location>
</feature>
<feature type="binding site" evidence="1">
    <location>
        <begin position="40"/>
        <end position="42"/>
    </location>
    <ligand>
        <name>ATP</name>
        <dbReference type="ChEBI" id="CHEBI:30616"/>
    </ligand>
</feature>
<feature type="binding site" evidence="1">
    <location>
        <begin position="99"/>
        <end position="100"/>
    </location>
    <ligand>
        <name>ATP</name>
        <dbReference type="ChEBI" id="CHEBI:30616"/>
    </ligand>
</feature>
<feature type="binding site" evidence="1">
    <location>
        <position position="134"/>
    </location>
    <ligand>
        <name>Mg(2+)</name>
        <dbReference type="ChEBI" id="CHEBI:18420"/>
        <label>1</label>
    </ligand>
</feature>
<feature type="binding site" evidence="1">
    <location>
        <position position="174"/>
    </location>
    <ligand>
        <name>Mg(2+)</name>
        <dbReference type="ChEBI" id="CHEBI:18420"/>
        <label>2</label>
    </ligand>
</feature>
<feature type="binding site" evidence="1">
    <location>
        <position position="200"/>
    </location>
    <ligand>
        <name>D-ribose 5-phosphate</name>
        <dbReference type="ChEBI" id="CHEBI:78346"/>
    </ligand>
</feature>
<feature type="binding site" evidence="1">
    <location>
        <position position="224"/>
    </location>
    <ligand>
        <name>D-ribose 5-phosphate</name>
        <dbReference type="ChEBI" id="CHEBI:78346"/>
    </ligand>
</feature>
<feature type="binding site" evidence="1">
    <location>
        <begin position="228"/>
        <end position="232"/>
    </location>
    <ligand>
        <name>D-ribose 5-phosphate</name>
        <dbReference type="ChEBI" id="CHEBI:78346"/>
    </ligand>
</feature>
<organism>
    <name type="scientific">Xanthomonas campestris pv. campestris (strain ATCC 33913 / DSM 3586 / NCPPB 528 / LMG 568 / P 25)</name>
    <dbReference type="NCBI Taxonomy" id="190485"/>
    <lineage>
        <taxon>Bacteria</taxon>
        <taxon>Pseudomonadati</taxon>
        <taxon>Pseudomonadota</taxon>
        <taxon>Gammaproteobacteria</taxon>
        <taxon>Lysobacterales</taxon>
        <taxon>Lysobacteraceae</taxon>
        <taxon>Xanthomonas</taxon>
    </lineage>
</organism>
<keyword id="KW-0067">ATP-binding</keyword>
<keyword id="KW-0963">Cytoplasm</keyword>
<keyword id="KW-0418">Kinase</keyword>
<keyword id="KW-0460">Magnesium</keyword>
<keyword id="KW-0479">Metal-binding</keyword>
<keyword id="KW-0545">Nucleotide biosynthesis</keyword>
<keyword id="KW-0547">Nucleotide-binding</keyword>
<keyword id="KW-1185">Reference proteome</keyword>
<keyword id="KW-0808">Transferase</keyword>
<accession>Q8PC63</accession>
<evidence type="ECO:0000255" key="1">
    <source>
        <dbReference type="HAMAP-Rule" id="MF_00583"/>
    </source>
</evidence>
<sequence length="319" mass="34509">MQDQRNLLVFSGNANKPLAQSICKELGVRMGKALVTRFSDGEVQVEIEESVRRQEVFVIQPTCAPSAENLMELLVLIDALKRASAASVTAVIPYFGYSRQDRRMRSSRVPITAKVAAKMICAMEADRVLTVDLHADQIQGFFDVPIDNVYASPLLLADIWRAYGTDNLIVVSPDVGGVVRARAVAKRLDDADLAIIDKRRPRANVATVMNIIGDVQGKTCVLVDDLVDTAGTLCAAAAALKQRGALKVVAYITHPVLSGPAVDNINNSQLDELVVTDTIPLSAAARTCPKIRQLSVAELLAETIHRIAFGESVSSLYVD</sequence>
<reference key="1">
    <citation type="journal article" date="2002" name="Nature">
        <title>Comparison of the genomes of two Xanthomonas pathogens with differing host specificities.</title>
        <authorList>
            <person name="da Silva A.C.R."/>
            <person name="Ferro J.A."/>
            <person name="Reinach F.C."/>
            <person name="Farah C.S."/>
            <person name="Furlan L.R."/>
            <person name="Quaggio R.B."/>
            <person name="Monteiro-Vitorello C.B."/>
            <person name="Van Sluys M.A."/>
            <person name="Almeida N.F. Jr."/>
            <person name="Alves L.M.C."/>
            <person name="do Amaral A.M."/>
            <person name="Bertolini M.C."/>
            <person name="Camargo L.E.A."/>
            <person name="Camarotte G."/>
            <person name="Cannavan F."/>
            <person name="Cardozo J."/>
            <person name="Chambergo F."/>
            <person name="Ciapina L.P."/>
            <person name="Cicarelli R.M.B."/>
            <person name="Coutinho L.L."/>
            <person name="Cursino-Santos J.R."/>
            <person name="El-Dorry H."/>
            <person name="Faria J.B."/>
            <person name="Ferreira A.J.S."/>
            <person name="Ferreira R.C.C."/>
            <person name="Ferro M.I.T."/>
            <person name="Formighieri E.F."/>
            <person name="Franco M.C."/>
            <person name="Greggio C.C."/>
            <person name="Gruber A."/>
            <person name="Katsuyama A.M."/>
            <person name="Kishi L.T."/>
            <person name="Leite R.P."/>
            <person name="Lemos E.G.M."/>
            <person name="Lemos M.V.F."/>
            <person name="Locali E.C."/>
            <person name="Machado M.A."/>
            <person name="Madeira A.M.B.N."/>
            <person name="Martinez-Rossi N.M."/>
            <person name="Martins E.C."/>
            <person name="Meidanis J."/>
            <person name="Menck C.F.M."/>
            <person name="Miyaki C.Y."/>
            <person name="Moon D.H."/>
            <person name="Moreira L.M."/>
            <person name="Novo M.T.M."/>
            <person name="Okura V.K."/>
            <person name="Oliveira M.C."/>
            <person name="Oliveira V.R."/>
            <person name="Pereira H.A."/>
            <person name="Rossi A."/>
            <person name="Sena J.A.D."/>
            <person name="Silva C."/>
            <person name="de Souza R.F."/>
            <person name="Spinola L.A.F."/>
            <person name="Takita M.A."/>
            <person name="Tamura R.E."/>
            <person name="Teixeira E.C."/>
            <person name="Tezza R.I.D."/>
            <person name="Trindade dos Santos M."/>
            <person name="Truffi D."/>
            <person name="Tsai S.M."/>
            <person name="White F.F."/>
            <person name="Setubal J.C."/>
            <person name="Kitajima J.P."/>
        </authorList>
    </citation>
    <scope>NUCLEOTIDE SEQUENCE [LARGE SCALE GENOMIC DNA]</scope>
    <source>
        <strain>ATCC 33913 / DSM 3586 / NCPPB 528 / LMG 568 / P 25</strain>
    </source>
</reference>
<dbReference type="EC" id="2.7.6.1" evidence="1"/>
<dbReference type="EMBL" id="AE008922">
    <property type="protein sequence ID" value="AAM40187.1"/>
    <property type="molecule type" value="Genomic_DNA"/>
</dbReference>
<dbReference type="RefSeq" id="NP_636263.1">
    <property type="nucleotide sequence ID" value="NC_003902.1"/>
</dbReference>
<dbReference type="RefSeq" id="WP_011036108.1">
    <property type="nucleotide sequence ID" value="NC_003902.1"/>
</dbReference>
<dbReference type="SMR" id="Q8PC63"/>
<dbReference type="STRING" id="190485.XCC0873"/>
<dbReference type="EnsemblBacteria" id="AAM40187">
    <property type="protein sequence ID" value="AAM40187"/>
    <property type="gene ID" value="XCC0873"/>
</dbReference>
<dbReference type="KEGG" id="xcc:XCC0873"/>
<dbReference type="PATRIC" id="fig|190485.4.peg.948"/>
<dbReference type="eggNOG" id="COG0462">
    <property type="taxonomic scope" value="Bacteria"/>
</dbReference>
<dbReference type="HOGENOM" id="CLU_033546_2_0_6"/>
<dbReference type="OrthoDB" id="9777067at2"/>
<dbReference type="UniPathway" id="UPA00087">
    <property type="reaction ID" value="UER00172"/>
</dbReference>
<dbReference type="Proteomes" id="UP000001010">
    <property type="component" value="Chromosome"/>
</dbReference>
<dbReference type="GO" id="GO:0005737">
    <property type="term" value="C:cytoplasm"/>
    <property type="evidence" value="ECO:0000318"/>
    <property type="project" value="GO_Central"/>
</dbReference>
<dbReference type="GO" id="GO:0002189">
    <property type="term" value="C:ribose phosphate diphosphokinase complex"/>
    <property type="evidence" value="ECO:0000318"/>
    <property type="project" value="GO_Central"/>
</dbReference>
<dbReference type="GO" id="GO:0005524">
    <property type="term" value="F:ATP binding"/>
    <property type="evidence" value="ECO:0007669"/>
    <property type="project" value="UniProtKB-KW"/>
</dbReference>
<dbReference type="GO" id="GO:0016301">
    <property type="term" value="F:kinase activity"/>
    <property type="evidence" value="ECO:0007669"/>
    <property type="project" value="UniProtKB-KW"/>
</dbReference>
<dbReference type="GO" id="GO:0000287">
    <property type="term" value="F:magnesium ion binding"/>
    <property type="evidence" value="ECO:0007669"/>
    <property type="project" value="UniProtKB-UniRule"/>
</dbReference>
<dbReference type="GO" id="GO:0004749">
    <property type="term" value="F:ribose phosphate diphosphokinase activity"/>
    <property type="evidence" value="ECO:0000318"/>
    <property type="project" value="GO_Central"/>
</dbReference>
<dbReference type="GO" id="GO:0006015">
    <property type="term" value="P:5-phosphoribose 1-diphosphate biosynthetic process"/>
    <property type="evidence" value="ECO:0000318"/>
    <property type="project" value="GO_Central"/>
</dbReference>
<dbReference type="GO" id="GO:0006164">
    <property type="term" value="P:purine nucleotide biosynthetic process"/>
    <property type="evidence" value="ECO:0000318"/>
    <property type="project" value="GO_Central"/>
</dbReference>
<dbReference type="GO" id="GO:0009156">
    <property type="term" value="P:ribonucleoside monophosphate biosynthetic process"/>
    <property type="evidence" value="ECO:0007669"/>
    <property type="project" value="InterPro"/>
</dbReference>
<dbReference type="CDD" id="cd06223">
    <property type="entry name" value="PRTases_typeI"/>
    <property type="match status" value="1"/>
</dbReference>
<dbReference type="FunFam" id="3.40.50.2020:FF:000001">
    <property type="entry name" value="Ribose-phosphate pyrophosphokinase"/>
    <property type="match status" value="1"/>
</dbReference>
<dbReference type="Gene3D" id="3.40.50.2020">
    <property type="match status" value="2"/>
</dbReference>
<dbReference type="HAMAP" id="MF_00583_B">
    <property type="entry name" value="RibP_PPkinase_B"/>
    <property type="match status" value="1"/>
</dbReference>
<dbReference type="InterPro" id="IPR000842">
    <property type="entry name" value="PRib_PP_synth_CS"/>
</dbReference>
<dbReference type="InterPro" id="IPR029099">
    <property type="entry name" value="Pribosyltran_N"/>
</dbReference>
<dbReference type="InterPro" id="IPR000836">
    <property type="entry name" value="PRibTrfase_dom"/>
</dbReference>
<dbReference type="InterPro" id="IPR029057">
    <property type="entry name" value="PRTase-like"/>
</dbReference>
<dbReference type="InterPro" id="IPR005946">
    <property type="entry name" value="Rib-P_diPkinase"/>
</dbReference>
<dbReference type="InterPro" id="IPR037515">
    <property type="entry name" value="Rib-P_diPkinase_bac"/>
</dbReference>
<dbReference type="NCBIfam" id="NF002320">
    <property type="entry name" value="PRK01259.1"/>
    <property type="match status" value="1"/>
</dbReference>
<dbReference type="NCBIfam" id="NF003428">
    <property type="entry name" value="PRK04923.1"/>
    <property type="match status" value="1"/>
</dbReference>
<dbReference type="NCBIfam" id="TIGR01251">
    <property type="entry name" value="ribP_PPkin"/>
    <property type="match status" value="1"/>
</dbReference>
<dbReference type="PANTHER" id="PTHR10210">
    <property type="entry name" value="RIBOSE-PHOSPHATE DIPHOSPHOKINASE FAMILY MEMBER"/>
    <property type="match status" value="1"/>
</dbReference>
<dbReference type="PANTHER" id="PTHR10210:SF41">
    <property type="entry name" value="RIBOSE-PHOSPHATE PYROPHOSPHOKINASE 1, CHLOROPLASTIC"/>
    <property type="match status" value="1"/>
</dbReference>
<dbReference type="Pfam" id="PF14572">
    <property type="entry name" value="Pribosyl_synth"/>
    <property type="match status" value="1"/>
</dbReference>
<dbReference type="Pfam" id="PF13793">
    <property type="entry name" value="Pribosyltran_N"/>
    <property type="match status" value="1"/>
</dbReference>
<dbReference type="SMART" id="SM01400">
    <property type="entry name" value="Pribosyltran_N"/>
    <property type="match status" value="1"/>
</dbReference>
<dbReference type="SUPFAM" id="SSF53271">
    <property type="entry name" value="PRTase-like"/>
    <property type="match status" value="1"/>
</dbReference>
<dbReference type="PROSITE" id="PS00114">
    <property type="entry name" value="PRPP_SYNTHASE"/>
    <property type="match status" value="1"/>
</dbReference>
<gene>
    <name evidence="1" type="primary">prs</name>
    <name type="synonym">prsA</name>
    <name type="ordered locus">XCC0873</name>
</gene>
<name>KPRS_XANCP</name>
<comment type="function">
    <text evidence="1">Involved in the biosynthesis of the central metabolite phospho-alpha-D-ribosyl-1-pyrophosphate (PRPP) via the transfer of pyrophosphoryl group from ATP to 1-hydroxyl of ribose-5-phosphate (Rib-5-P).</text>
</comment>
<comment type="catalytic activity">
    <reaction evidence="1">
        <text>D-ribose 5-phosphate + ATP = 5-phospho-alpha-D-ribose 1-diphosphate + AMP + H(+)</text>
        <dbReference type="Rhea" id="RHEA:15609"/>
        <dbReference type="ChEBI" id="CHEBI:15378"/>
        <dbReference type="ChEBI" id="CHEBI:30616"/>
        <dbReference type="ChEBI" id="CHEBI:58017"/>
        <dbReference type="ChEBI" id="CHEBI:78346"/>
        <dbReference type="ChEBI" id="CHEBI:456215"/>
        <dbReference type="EC" id="2.7.6.1"/>
    </reaction>
</comment>
<comment type="cofactor">
    <cofactor evidence="1">
        <name>Mg(2+)</name>
        <dbReference type="ChEBI" id="CHEBI:18420"/>
    </cofactor>
    <text evidence="1">Binds 2 Mg(2+) ions per subunit.</text>
</comment>
<comment type="pathway">
    <text evidence="1">Metabolic intermediate biosynthesis; 5-phospho-alpha-D-ribose 1-diphosphate biosynthesis; 5-phospho-alpha-D-ribose 1-diphosphate from D-ribose 5-phosphate (route I): step 1/1.</text>
</comment>
<comment type="subunit">
    <text evidence="1">Homohexamer.</text>
</comment>
<comment type="subcellular location">
    <subcellularLocation>
        <location evidence="1">Cytoplasm</location>
    </subcellularLocation>
</comment>
<comment type="similarity">
    <text evidence="1">Belongs to the ribose-phosphate pyrophosphokinase family. Class I subfamily.</text>
</comment>
<protein>
    <recommendedName>
        <fullName evidence="1">Ribose-phosphate pyrophosphokinase</fullName>
        <shortName evidence="1">RPPK</shortName>
        <ecNumber evidence="1">2.7.6.1</ecNumber>
    </recommendedName>
    <alternativeName>
        <fullName evidence="1">5-phospho-D-ribosyl alpha-1-diphosphate synthase</fullName>
    </alternativeName>
    <alternativeName>
        <fullName evidence="1">Phosphoribosyl diphosphate synthase</fullName>
    </alternativeName>
    <alternativeName>
        <fullName evidence="1">Phosphoribosyl pyrophosphate synthase</fullName>
        <shortName evidence="1">P-Rib-PP synthase</shortName>
        <shortName evidence="1">PRPP synthase</shortName>
        <shortName evidence="1">PRPPase</shortName>
    </alternativeName>
</protein>
<proteinExistence type="inferred from homology"/>